<reference key="1">
    <citation type="journal article" date="1994" name="J. Biochem.">
        <title>Enhancement of serine-sensitivity by a gene encoding rhodanese-like protein in Escherichia coli.</title>
        <authorList>
            <person name="Hama H."/>
            <person name="Kayahara T."/>
            <person name="Ogawa W."/>
            <person name="Tsuda M."/>
            <person name="Tsuchiya T."/>
        </authorList>
    </citation>
    <scope>NUCLEOTIDE SEQUENCE [GENOMIC DNA]</scope>
    <scope>FUNCTION</scope>
    <source>
        <strain>K12 / W3133-2</strain>
    </source>
</reference>
<reference key="2">
    <citation type="journal article" date="1997" name="DNA Res.">
        <title>Construction of a contiguous 874-kb sequence of the Escherichia coli-K12 genome corresponding to 50.0-68.8 min on the linkage map and analysis of its sequence features.</title>
        <authorList>
            <person name="Yamamoto Y."/>
            <person name="Aiba H."/>
            <person name="Baba T."/>
            <person name="Hayashi K."/>
            <person name="Inada T."/>
            <person name="Isono K."/>
            <person name="Itoh T."/>
            <person name="Kimura S."/>
            <person name="Kitagawa M."/>
            <person name="Makino K."/>
            <person name="Miki T."/>
            <person name="Mitsuhashi N."/>
            <person name="Mizobuchi K."/>
            <person name="Mori H."/>
            <person name="Nakade S."/>
            <person name="Nakamura Y."/>
            <person name="Nashimoto H."/>
            <person name="Oshima T."/>
            <person name="Oyama S."/>
            <person name="Saito N."/>
            <person name="Sampei G."/>
            <person name="Satoh Y."/>
            <person name="Sivasundaram S."/>
            <person name="Tagami H."/>
            <person name="Takahashi H."/>
            <person name="Takeda J."/>
            <person name="Takemoto K."/>
            <person name="Uehara K."/>
            <person name="Wada C."/>
            <person name="Yamagata S."/>
            <person name="Horiuchi T."/>
        </authorList>
    </citation>
    <scope>NUCLEOTIDE SEQUENCE [LARGE SCALE GENOMIC DNA]</scope>
    <source>
        <strain>K12 / W3110 / ATCC 27325 / DSM 5911</strain>
    </source>
</reference>
<reference key="3">
    <citation type="journal article" date="1997" name="Science">
        <title>The complete genome sequence of Escherichia coli K-12.</title>
        <authorList>
            <person name="Blattner F.R."/>
            <person name="Plunkett G. III"/>
            <person name="Bloch C.A."/>
            <person name="Perna N.T."/>
            <person name="Burland V."/>
            <person name="Riley M."/>
            <person name="Collado-Vides J."/>
            <person name="Glasner J.D."/>
            <person name="Rode C.K."/>
            <person name="Mayhew G.F."/>
            <person name="Gregor J."/>
            <person name="Davis N.W."/>
            <person name="Kirkpatrick H.A."/>
            <person name="Goeden M.A."/>
            <person name="Rose D.J."/>
            <person name="Mau B."/>
            <person name="Shao Y."/>
        </authorList>
    </citation>
    <scope>NUCLEOTIDE SEQUENCE [LARGE SCALE GENOMIC DNA]</scope>
    <source>
        <strain>K12 / MG1655 / ATCC 47076</strain>
    </source>
</reference>
<reference key="4">
    <citation type="journal article" date="2006" name="Mol. Syst. Biol.">
        <title>Highly accurate genome sequences of Escherichia coli K-12 strains MG1655 and W3110.</title>
        <authorList>
            <person name="Hayashi K."/>
            <person name="Morooka N."/>
            <person name="Yamamoto Y."/>
            <person name="Fujita K."/>
            <person name="Isono K."/>
            <person name="Choi S."/>
            <person name="Ohtsubo E."/>
            <person name="Baba T."/>
            <person name="Wanner B.L."/>
            <person name="Mori H."/>
            <person name="Horiuchi T."/>
        </authorList>
    </citation>
    <scope>NUCLEOTIDE SEQUENCE [LARGE SCALE GENOMIC DNA]</scope>
    <source>
        <strain>K12 / W3110 / ATCC 27325 / DSM 5911</strain>
    </source>
</reference>
<reference key="5">
    <citation type="journal article" date="1997" name="Electrophoresis">
        <title>Comparing the predicted and observed properties of proteins encoded in the genome of Escherichia coli K-12.</title>
        <authorList>
            <person name="Link A.J."/>
            <person name="Robison K."/>
            <person name="Church G.M."/>
        </authorList>
    </citation>
    <scope>PROTEIN SEQUENCE OF 2-13</scope>
    <source>
        <strain>K12 / EMG2</strain>
    </source>
</reference>
<reference key="6">
    <citation type="journal article" date="2001" name="FEBS Lett.">
        <title>Properties of the Escherichia coli rhodanese-like protein SseA: contribution of the active-site residue Ser240 to sulfur donor recognition.</title>
        <authorList>
            <person name="Colnaghi R."/>
            <person name="Cassinelli G."/>
            <person name="Drummond M."/>
            <person name="Forlani F."/>
            <person name="Pagani S."/>
        </authorList>
    </citation>
    <scope>FUNCTION</scope>
    <scope>CATALYTIC ACTIVITY</scope>
    <scope>MUTAGENESIS OF SER-240</scope>
</reference>
<reference key="7">
    <citation type="journal article" date="2004" name="J. Mol. Biol.">
        <title>The 'rhodanese' fold and catalytic mechanism of 3-mercaptopyruvate sulfurtransferases: crystal structure of SseA from Escherichia coli.</title>
        <authorList>
            <person name="Spallarossa A."/>
            <person name="Forlani F."/>
            <person name="Carpen A."/>
            <person name="Armirotti A."/>
            <person name="Pagani S."/>
            <person name="Bolognesi M."/>
            <person name="Bordo D."/>
        </authorList>
    </citation>
    <scope>X-RAY CRYSTALLOGRAPHY (2.8 ANGSTROMS)</scope>
    <scope>SUBUNIT</scope>
</reference>
<name>THTM_ECOLI</name>
<organism>
    <name type="scientific">Escherichia coli (strain K12)</name>
    <dbReference type="NCBI Taxonomy" id="83333"/>
    <lineage>
        <taxon>Bacteria</taxon>
        <taxon>Pseudomonadati</taxon>
        <taxon>Pseudomonadota</taxon>
        <taxon>Gammaproteobacteria</taxon>
        <taxon>Enterobacterales</taxon>
        <taxon>Enterobacteriaceae</taxon>
        <taxon>Escherichia</taxon>
    </lineage>
</organism>
<accession>P31142</accession>
<accession>P78096</accession>
<comment type="function">
    <text evidence="6 9">Catalyzes the transfer of sulfur from 3-mercaptopyruvate to a thiol-containing acceptor to form an intramolecular disulfide releasing hydrogen sulfide and pyruvate (Probable). May be involved in the enhancement of bacterial growth inhibition by serine (PubMed:7982894).</text>
</comment>
<comment type="catalytic activity">
    <reaction evidence="9">
        <text>2-oxo-3-sulfanylpropanoate + [thioredoxin]-dithiol = [thioredoxin]-disulfide + hydrogen sulfide + pyruvate + H(+)</text>
        <dbReference type="Rhea" id="RHEA:21740"/>
        <dbReference type="Rhea" id="RHEA-COMP:10698"/>
        <dbReference type="Rhea" id="RHEA-COMP:10700"/>
        <dbReference type="ChEBI" id="CHEBI:15361"/>
        <dbReference type="ChEBI" id="CHEBI:15378"/>
        <dbReference type="ChEBI" id="CHEBI:29919"/>
        <dbReference type="ChEBI" id="CHEBI:29950"/>
        <dbReference type="ChEBI" id="CHEBI:50058"/>
        <dbReference type="ChEBI" id="CHEBI:57678"/>
        <dbReference type="EC" id="2.8.1.2"/>
    </reaction>
    <physiologicalReaction direction="left-to-right" evidence="9">
        <dbReference type="Rhea" id="RHEA:21741"/>
    </physiologicalReaction>
</comment>
<comment type="subunit">
    <text evidence="5">Monomer.</text>
</comment>
<comment type="subcellular location">
    <subcellularLocation>
        <location evidence="8">Cytoplasm</location>
    </subcellularLocation>
</comment>
<comment type="domain">
    <text>The N-terminal region is the non-catalytic domain; the C-terminus contains the active-site cysteine residue and the CGSGVTA motif probably responsible for substrate specificity.</text>
</comment>
<comment type="domain">
    <text evidence="1">Contains two rhodanese domains with different primary structures but with near identical secondary structure conformations suggesting a common evolutionary origin. Only the C-terminal rhodanese domain contains the catalytic cysteine residue (By similarity).</text>
</comment>
<comment type="sequence caution" evidence="8">
    <conflict type="frameshift">
        <sequence resource="EMBL-CDS" id="BAA01382"/>
    </conflict>
</comment>
<sequence length="281" mass="30812">MSTTWFVGADWLAEHIDDPEIQIIDARMASPGQEDRNVAQEYLNGHIPGAVFFDIEALSDHTSPLPHMLPRPETFAVAMRELGVNQDKHLIVYDEGNLFSAPRAWWMLRTFGVEKVSILGGGLAGWQRDDLLLEEGAVELPEGEFNAAFNPEAVVKVTDVLLASHENTAQIIDARPAARFNAEVDEPRPGLRRGHIPGALNVPWTELVREGELKTTDELDAIFFGRGVSYDKPIIVSCGSGVTAAVVLLALATLDVPNVKLYDGAWSEWGARADLPVEPVK</sequence>
<keyword id="KW-0002">3D-structure</keyword>
<keyword id="KW-0963">Cytoplasm</keyword>
<keyword id="KW-0903">Direct protein sequencing</keyword>
<keyword id="KW-1185">Reference proteome</keyword>
<keyword id="KW-0677">Repeat</keyword>
<keyword id="KW-0808">Transferase</keyword>
<feature type="initiator methionine" description="Removed" evidence="7">
    <location>
        <position position="1"/>
    </location>
</feature>
<feature type="chain" id="PRO_0000139409" description="3-mercaptopyruvate sulfurtransferase">
    <location>
        <begin position="2"/>
        <end position="281"/>
    </location>
</feature>
<feature type="domain" description="Rhodanese 1" evidence="3">
    <location>
        <begin position="17"/>
        <end position="135"/>
    </location>
</feature>
<feature type="domain" description="Rhodanese 2" evidence="3">
    <location>
        <begin position="165"/>
        <end position="278"/>
    </location>
</feature>
<feature type="region of interest" description="Substrate specificity" evidence="2">
    <location>
        <begin position="238"/>
        <end position="244"/>
    </location>
</feature>
<feature type="active site" description="Cysteine persulfide intermediate">
    <location>
        <position position="238"/>
    </location>
</feature>
<feature type="binding site" evidence="1">
    <location>
        <position position="179"/>
    </location>
    <ligand>
        <name>substrate</name>
    </ligand>
</feature>
<feature type="mutagenesis site" description="Decrease in 3-mercaptopyruvate cyanide sulfurtransferase activity; abolition of thiosulfate binding." evidence="4">
    <original>S</original>
    <variation>A</variation>
    <location>
        <position position="240"/>
    </location>
</feature>
<feature type="mutagenesis site" description="Decrease in 3-mercaptopyruvate cyanide sulfurtransferase activity; increased affinity for thiosulfate." evidence="4">
    <original>S</original>
    <variation>K</variation>
    <location>
        <position position="240"/>
    </location>
</feature>
<feature type="helix" evidence="10">
    <location>
        <begin position="9"/>
        <end position="13"/>
    </location>
</feature>
<feature type="turn" evidence="10">
    <location>
        <begin position="14"/>
        <end position="17"/>
    </location>
</feature>
<feature type="strand" evidence="10">
    <location>
        <begin position="21"/>
        <end position="25"/>
    </location>
</feature>
<feature type="helix" evidence="10">
    <location>
        <begin position="38"/>
        <end position="44"/>
    </location>
</feature>
<feature type="helix" evidence="10">
    <location>
        <begin position="55"/>
        <end position="58"/>
    </location>
</feature>
<feature type="strand" evidence="10">
    <location>
        <begin position="61"/>
        <end position="67"/>
    </location>
</feature>
<feature type="helix" evidence="10">
    <location>
        <begin position="72"/>
        <end position="81"/>
    </location>
</feature>
<feature type="strand" evidence="10">
    <location>
        <begin position="88"/>
        <end position="93"/>
    </location>
</feature>
<feature type="strand" evidence="10">
    <location>
        <begin position="95"/>
        <end position="97"/>
    </location>
</feature>
<feature type="helix" evidence="10">
    <location>
        <begin position="101"/>
        <end position="110"/>
    </location>
</feature>
<feature type="strand" evidence="10">
    <location>
        <begin position="116"/>
        <end position="119"/>
    </location>
</feature>
<feature type="helix" evidence="10">
    <location>
        <begin position="122"/>
        <end position="128"/>
    </location>
</feature>
<feature type="strand" evidence="10">
    <location>
        <begin position="134"/>
        <end position="136"/>
    </location>
</feature>
<feature type="helix" evidence="10">
    <location>
        <begin position="151"/>
        <end position="153"/>
    </location>
</feature>
<feature type="helix" evidence="10">
    <location>
        <begin position="157"/>
        <end position="166"/>
    </location>
</feature>
<feature type="strand" evidence="10">
    <location>
        <begin position="169"/>
        <end position="173"/>
    </location>
</feature>
<feature type="helix" evidence="10">
    <location>
        <begin position="177"/>
        <end position="180"/>
    </location>
</feature>
<feature type="strand" evidence="10">
    <location>
        <begin position="193"/>
        <end position="195"/>
    </location>
</feature>
<feature type="helix" evidence="10">
    <location>
        <begin position="204"/>
        <end position="207"/>
    </location>
</feature>
<feature type="strand" evidence="10">
    <location>
        <begin position="208"/>
        <end position="213"/>
    </location>
</feature>
<feature type="helix" evidence="10">
    <location>
        <begin position="216"/>
        <end position="224"/>
    </location>
</feature>
<feature type="turn" evidence="10">
    <location>
        <begin position="225"/>
        <end position="227"/>
    </location>
</feature>
<feature type="strand" evidence="10">
    <location>
        <begin position="230"/>
        <end position="232"/>
    </location>
</feature>
<feature type="strand" evidence="10">
    <location>
        <begin position="234"/>
        <end position="237"/>
    </location>
</feature>
<feature type="strand" evidence="10">
    <location>
        <begin position="240"/>
        <end position="242"/>
    </location>
</feature>
<feature type="helix" evidence="10">
    <location>
        <begin position="244"/>
        <end position="253"/>
    </location>
</feature>
<feature type="strand" evidence="10">
    <location>
        <begin position="260"/>
        <end position="262"/>
    </location>
</feature>
<proteinExistence type="evidence at protein level"/>
<gene>
    <name type="primary">sseA</name>
    <name type="ordered locus">b2521</name>
    <name type="ordered locus">JW2505</name>
</gene>
<dbReference type="EC" id="2.8.1.2" evidence="9"/>
<dbReference type="EMBL" id="D10496">
    <property type="protein sequence ID" value="BAA01382.1"/>
    <property type="status" value="ALT_FRAME"/>
    <property type="molecule type" value="Genomic_DNA"/>
</dbReference>
<dbReference type="EMBL" id="U00096">
    <property type="protein sequence ID" value="AAC75574.2"/>
    <property type="molecule type" value="Genomic_DNA"/>
</dbReference>
<dbReference type="EMBL" id="AP009048">
    <property type="protein sequence ID" value="BAA16411.2"/>
    <property type="molecule type" value="Genomic_DNA"/>
</dbReference>
<dbReference type="PIR" id="H65028">
    <property type="entry name" value="H65028"/>
</dbReference>
<dbReference type="RefSeq" id="NP_417016.4">
    <property type="nucleotide sequence ID" value="NC_000913.3"/>
</dbReference>
<dbReference type="RefSeq" id="WP_000108626.1">
    <property type="nucleotide sequence ID" value="NZ_STEB01000011.1"/>
</dbReference>
<dbReference type="PDB" id="1URH">
    <property type="method" value="X-ray"/>
    <property type="resolution" value="2.80 A"/>
    <property type="chains" value="A/B=2-281"/>
</dbReference>
<dbReference type="PDBsum" id="1URH"/>
<dbReference type="SMR" id="P31142"/>
<dbReference type="BioGRID" id="4260592">
    <property type="interactions" value="28"/>
</dbReference>
<dbReference type="DIP" id="DIP-10921N"/>
<dbReference type="FunCoup" id="P31142">
    <property type="interactions" value="810"/>
</dbReference>
<dbReference type="IntAct" id="P31142">
    <property type="interactions" value="1"/>
</dbReference>
<dbReference type="STRING" id="511145.b2521"/>
<dbReference type="DrugBank" id="DB02761">
    <property type="generic name" value="S-Mercaptocysteine"/>
</dbReference>
<dbReference type="jPOST" id="P31142"/>
<dbReference type="PaxDb" id="511145-b2521"/>
<dbReference type="EnsemblBacteria" id="AAC75574">
    <property type="protein sequence ID" value="AAC75574"/>
    <property type="gene ID" value="b2521"/>
</dbReference>
<dbReference type="GeneID" id="93774615"/>
<dbReference type="GeneID" id="946993"/>
<dbReference type="KEGG" id="ecj:JW2505"/>
<dbReference type="KEGG" id="eco:b2521"/>
<dbReference type="KEGG" id="ecoc:C3026_13975"/>
<dbReference type="PATRIC" id="fig|1411691.4.peg.4215"/>
<dbReference type="EchoBASE" id="EB1557"/>
<dbReference type="eggNOG" id="COG2897">
    <property type="taxonomic scope" value="Bacteria"/>
</dbReference>
<dbReference type="HOGENOM" id="CLU_031618_3_0_6"/>
<dbReference type="InParanoid" id="P31142"/>
<dbReference type="OMA" id="NNNWFAS"/>
<dbReference type="OrthoDB" id="9781034at2"/>
<dbReference type="PhylomeDB" id="P31142"/>
<dbReference type="BioCyc" id="EcoCyc:EG11600-MONOMER"/>
<dbReference type="BioCyc" id="MetaCyc:EG11600-MONOMER"/>
<dbReference type="BRENDA" id="2.8.1.2">
    <property type="organism ID" value="2026"/>
</dbReference>
<dbReference type="EvolutionaryTrace" id="P31142"/>
<dbReference type="PRO" id="PR:P31142"/>
<dbReference type="Proteomes" id="UP000000625">
    <property type="component" value="Chromosome"/>
</dbReference>
<dbReference type="GO" id="GO:0005829">
    <property type="term" value="C:cytosol"/>
    <property type="evidence" value="ECO:0000314"/>
    <property type="project" value="EcoCyc"/>
</dbReference>
<dbReference type="GO" id="GO:0016784">
    <property type="term" value="F:3-mercaptopyruvate sulfurtransferase activity"/>
    <property type="evidence" value="ECO:0000314"/>
    <property type="project" value="EcoCyc"/>
</dbReference>
<dbReference type="GO" id="GO:0004792">
    <property type="term" value="F:thiosulfate-cyanide sulfurtransferase activity"/>
    <property type="evidence" value="ECO:0000314"/>
    <property type="project" value="EcoCyc"/>
</dbReference>
<dbReference type="GO" id="GO:0042262">
    <property type="term" value="P:DNA protection"/>
    <property type="evidence" value="ECO:0000315"/>
    <property type="project" value="EcoCyc"/>
</dbReference>
<dbReference type="GO" id="GO:0046677">
    <property type="term" value="P:response to antibiotic"/>
    <property type="evidence" value="ECO:0000315"/>
    <property type="project" value="EcoCyc"/>
</dbReference>
<dbReference type="GO" id="GO:0006979">
    <property type="term" value="P:response to oxidative stress"/>
    <property type="evidence" value="ECO:0000315"/>
    <property type="project" value="EcoCyc"/>
</dbReference>
<dbReference type="CDD" id="cd01448">
    <property type="entry name" value="TST_Repeat_1"/>
    <property type="match status" value="1"/>
</dbReference>
<dbReference type="CDD" id="cd01449">
    <property type="entry name" value="TST_Repeat_2"/>
    <property type="match status" value="1"/>
</dbReference>
<dbReference type="FunFam" id="3.40.250.10:FF:000001">
    <property type="entry name" value="Sulfurtransferase"/>
    <property type="match status" value="1"/>
</dbReference>
<dbReference type="FunFam" id="3.40.250.10:FF:000015">
    <property type="entry name" value="Sulfurtransferase"/>
    <property type="match status" value="1"/>
</dbReference>
<dbReference type="Gene3D" id="3.40.250.10">
    <property type="entry name" value="Rhodanese-like domain"/>
    <property type="match status" value="2"/>
</dbReference>
<dbReference type="InterPro" id="IPR001763">
    <property type="entry name" value="Rhodanese-like_dom"/>
</dbReference>
<dbReference type="InterPro" id="IPR036873">
    <property type="entry name" value="Rhodanese-like_dom_sf"/>
</dbReference>
<dbReference type="InterPro" id="IPR001307">
    <property type="entry name" value="Thiosulphate_STrfase_CS"/>
</dbReference>
<dbReference type="InterPro" id="IPR045078">
    <property type="entry name" value="TST/MPST-like"/>
</dbReference>
<dbReference type="NCBIfam" id="NF008557">
    <property type="entry name" value="PRK11493.1"/>
    <property type="match status" value="1"/>
</dbReference>
<dbReference type="PANTHER" id="PTHR11364:SF27">
    <property type="entry name" value="SULFURTRANSFERASE"/>
    <property type="match status" value="1"/>
</dbReference>
<dbReference type="PANTHER" id="PTHR11364">
    <property type="entry name" value="THIOSULFATE SULFERTANSFERASE"/>
    <property type="match status" value="1"/>
</dbReference>
<dbReference type="Pfam" id="PF00581">
    <property type="entry name" value="Rhodanese"/>
    <property type="match status" value="2"/>
</dbReference>
<dbReference type="SMART" id="SM00450">
    <property type="entry name" value="RHOD"/>
    <property type="match status" value="2"/>
</dbReference>
<dbReference type="SUPFAM" id="SSF52821">
    <property type="entry name" value="Rhodanese/Cell cycle control phosphatase"/>
    <property type="match status" value="2"/>
</dbReference>
<dbReference type="PROSITE" id="PS00380">
    <property type="entry name" value="RHODANESE_1"/>
    <property type="match status" value="1"/>
</dbReference>
<dbReference type="PROSITE" id="PS00683">
    <property type="entry name" value="RHODANESE_2"/>
    <property type="match status" value="1"/>
</dbReference>
<dbReference type="PROSITE" id="PS50206">
    <property type="entry name" value="RHODANESE_3"/>
    <property type="match status" value="2"/>
</dbReference>
<evidence type="ECO:0000250" key="1"/>
<evidence type="ECO:0000255" key="2"/>
<evidence type="ECO:0000255" key="3">
    <source>
        <dbReference type="PROSITE-ProRule" id="PRU00173"/>
    </source>
</evidence>
<evidence type="ECO:0000269" key="4">
    <source>
    </source>
</evidence>
<evidence type="ECO:0000269" key="5">
    <source>
    </source>
</evidence>
<evidence type="ECO:0000269" key="6">
    <source>
    </source>
</evidence>
<evidence type="ECO:0000269" key="7">
    <source>
    </source>
</evidence>
<evidence type="ECO:0000305" key="8"/>
<evidence type="ECO:0000305" key="9">
    <source>
    </source>
</evidence>
<evidence type="ECO:0007829" key="10">
    <source>
        <dbReference type="PDB" id="1URH"/>
    </source>
</evidence>
<protein>
    <recommendedName>
        <fullName>3-mercaptopyruvate sulfurtransferase</fullName>
        <shortName>MST</shortName>
        <ecNumber evidence="9">2.8.1.2</ecNumber>
    </recommendedName>
    <alternativeName>
        <fullName>Rhodanese-like protein</fullName>
    </alternativeName>
</protein>